<proteinExistence type="inferred from homology"/>
<keyword id="KW-1185">Reference proteome</keyword>
<keyword id="KW-0687">Ribonucleoprotein</keyword>
<keyword id="KW-0689">Ribosomal protein</keyword>
<reference key="1">
    <citation type="journal article" date="2004" name="Proc. Natl. Acad. Sci. U.S.A.">
        <title>Comparison of the genome of the oral pathogen Treponema denticola with other spirochete genomes.</title>
        <authorList>
            <person name="Seshadri R."/>
            <person name="Myers G.S.A."/>
            <person name="Tettelin H."/>
            <person name="Eisen J.A."/>
            <person name="Heidelberg J.F."/>
            <person name="Dodson R.J."/>
            <person name="Davidsen T.M."/>
            <person name="DeBoy R.T."/>
            <person name="Fouts D.E."/>
            <person name="Haft D.H."/>
            <person name="Selengut J."/>
            <person name="Ren Q."/>
            <person name="Brinkac L.M."/>
            <person name="Madupu R."/>
            <person name="Kolonay J.F."/>
            <person name="Durkin S.A."/>
            <person name="Daugherty S.C."/>
            <person name="Shetty J."/>
            <person name="Shvartsbeyn A."/>
            <person name="Gebregeorgis E."/>
            <person name="Geer K."/>
            <person name="Tsegaye G."/>
            <person name="Malek J.A."/>
            <person name="Ayodeji B."/>
            <person name="Shatsman S."/>
            <person name="McLeod M.P."/>
            <person name="Smajs D."/>
            <person name="Howell J.K."/>
            <person name="Pal S."/>
            <person name="Amin A."/>
            <person name="Vashisth P."/>
            <person name="McNeill T.Z."/>
            <person name="Xiang Q."/>
            <person name="Sodergren E."/>
            <person name="Baca E."/>
            <person name="Weinstock G.M."/>
            <person name="Norris S.J."/>
            <person name="Fraser C.M."/>
            <person name="Paulsen I.T."/>
        </authorList>
    </citation>
    <scope>NUCLEOTIDE SEQUENCE [LARGE SCALE GENOMIC DNA]</scope>
    <source>
        <strain>ATCC 35405 / DSM 14222 / CIP 103919 / JCM 8153 / KCTC 15104</strain>
    </source>
</reference>
<evidence type="ECO:0000255" key="1">
    <source>
        <dbReference type="HAMAP-Rule" id="MF_01371"/>
    </source>
</evidence>
<evidence type="ECO:0000305" key="2"/>
<organism>
    <name type="scientific">Treponema denticola (strain ATCC 35405 / DSM 14222 / CIP 103919 / JCM 8153 / KCTC 15104)</name>
    <dbReference type="NCBI Taxonomy" id="243275"/>
    <lineage>
        <taxon>Bacteria</taxon>
        <taxon>Pseudomonadati</taxon>
        <taxon>Spirochaetota</taxon>
        <taxon>Spirochaetia</taxon>
        <taxon>Spirochaetales</taxon>
        <taxon>Treponemataceae</taxon>
        <taxon>Treponema</taxon>
    </lineage>
</organism>
<comment type="subunit">
    <text evidence="1">Part of the 50S ribosomal subunit.</text>
</comment>
<comment type="similarity">
    <text evidence="1">Belongs to the universal ribosomal protein uL30 family.</text>
</comment>
<gene>
    <name evidence="1" type="primary">rpmD</name>
    <name type="ordered locus">TDE_0785</name>
</gene>
<accession>Q73PL4</accession>
<feature type="chain" id="PRO_1000056127" description="Large ribosomal subunit protein uL30">
    <location>
        <begin position="1"/>
        <end position="61"/>
    </location>
</feature>
<protein>
    <recommendedName>
        <fullName evidence="1">Large ribosomal subunit protein uL30</fullName>
    </recommendedName>
    <alternativeName>
        <fullName evidence="2">50S ribosomal protein L30</fullName>
    </alternativeName>
</protein>
<name>RL30_TREDE</name>
<sequence>MAKRISVKLVKSTIGQKQPVCSTIRSLGLKKLNSTVEHDANPAVLGMVKRVAHLVEVKELN</sequence>
<dbReference type="EMBL" id="AE017226">
    <property type="protein sequence ID" value="AAS11276.1"/>
    <property type="molecule type" value="Genomic_DNA"/>
</dbReference>
<dbReference type="RefSeq" id="NP_971395.1">
    <property type="nucleotide sequence ID" value="NC_002967.9"/>
</dbReference>
<dbReference type="RefSeq" id="WP_002670028.1">
    <property type="nucleotide sequence ID" value="NC_002967.9"/>
</dbReference>
<dbReference type="SMR" id="Q73PL4"/>
<dbReference type="STRING" id="243275.TDE_0785"/>
<dbReference type="PaxDb" id="243275-TDE_0785"/>
<dbReference type="GeneID" id="2740663"/>
<dbReference type="KEGG" id="tde:TDE_0785"/>
<dbReference type="PATRIC" id="fig|243275.7.peg.758"/>
<dbReference type="eggNOG" id="COG1841">
    <property type="taxonomic scope" value="Bacteria"/>
</dbReference>
<dbReference type="HOGENOM" id="CLU_131047_1_3_12"/>
<dbReference type="OrthoDB" id="9812790at2"/>
<dbReference type="Proteomes" id="UP000008212">
    <property type="component" value="Chromosome"/>
</dbReference>
<dbReference type="GO" id="GO:0022625">
    <property type="term" value="C:cytosolic large ribosomal subunit"/>
    <property type="evidence" value="ECO:0007669"/>
    <property type="project" value="TreeGrafter"/>
</dbReference>
<dbReference type="GO" id="GO:0003735">
    <property type="term" value="F:structural constituent of ribosome"/>
    <property type="evidence" value="ECO:0007669"/>
    <property type="project" value="InterPro"/>
</dbReference>
<dbReference type="GO" id="GO:0006412">
    <property type="term" value="P:translation"/>
    <property type="evidence" value="ECO:0007669"/>
    <property type="project" value="UniProtKB-UniRule"/>
</dbReference>
<dbReference type="CDD" id="cd01658">
    <property type="entry name" value="Ribosomal_L30"/>
    <property type="match status" value="1"/>
</dbReference>
<dbReference type="Gene3D" id="3.30.1390.20">
    <property type="entry name" value="Ribosomal protein L30, ferredoxin-like fold domain"/>
    <property type="match status" value="1"/>
</dbReference>
<dbReference type="HAMAP" id="MF_01371_B">
    <property type="entry name" value="Ribosomal_uL30_B"/>
    <property type="match status" value="1"/>
</dbReference>
<dbReference type="InterPro" id="IPR036919">
    <property type="entry name" value="Ribo_uL30_ferredoxin-like_sf"/>
</dbReference>
<dbReference type="InterPro" id="IPR005996">
    <property type="entry name" value="Ribosomal_uL30_bac-type"/>
</dbReference>
<dbReference type="InterPro" id="IPR018038">
    <property type="entry name" value="Ribosomal_uL30_CS"/>
</dbReference>
<dbReference type="InterPro" id="IPR016082">
    <property type="entry name" value="Ribosomal_uL30_ferredoxin-like"/>
</dbReference>
<dbReference type="NCBIfam" id="TIGR01308">
    <property type="entry name" value="rpmD_bact"/>
    <property type="match status" value="1"/>
</dbReference>
<dbReference type="PANTHER" id="PTHR15892:SF2">
    <property type="entry name" value="LARGE RIBOSOMAL SUBUNIT PROTEIN UL30M"/>
    <property type="match status" value="1"/>
</dbReference>
<dbReference type="PANTHER" id="PTHR15892">
    <property type="entry name" value="MITOCHONDRIAL RIBOSOMAL PROTEIN L30"/>
    <property type="match status" value="1"/>
</dbReference>
<dbReference type="Pfam" id="PF00327">
    <property type="entry name" value="Ribosomal_L30"/>
    <property type="match status" value="1"/>
</dbReference>
<dbReference type="PIRSF" id="PIRSF002211">
    <property type="entry name" value="Ribosomal_L30_bac-type"/>
    <property type="match status" value="1"/>
</dbReference>
<dbReference type="SUPFAM" id="SSF55129">
    <property type="entry name" value="Ribosomal protein L30p/L7e"/>
    <property type="match status" value="1"/>
</dbReference>
<dbReference type="PROSITE" id="PS00634">
    <property type="entry name" value="RIBOSOMAL_L30"/>
    <property type="match status" value="1"/>
</dbReference>